<organism>
    <name type="scientific">Yersinia pseudotuberculosis serotype O:3 (strain YPIII)</name>
    <dbReference type="NCBI Taxonomy" id="502800"/>
    <lineage>
        <taxon>Bacteria</taxon>
        <taxon>Pseudomonadati</taxon>
        <taxon>Pseudomonadota</taxon>
        <taxon>Gammaproteobacteria</taxon>
        <taxon>Enterobacterales</taxon>
        <taxon>Yersiniaceae</taxon>
        <taxon>Yersinia</taxon>
    </lineage>
</organism>
<keyword id="KW-0067">ATP-binding</keyword>
<keyword id="KW-0131">Cell cycle</keyword>
<keyword id="KW-0132">Cell division</keyword>
<keyword id="KW-0159">Chromosome partition</keyword>
<keyword id="KW-0175">Coiled coil</keyword>
<keyword id="KW-0963">Cytoplasm</keyword>
<keyword id="KW-0226">DNA condensation</keyword>
<keyword id="KW-0238">DNA-binding</keyword>
<keyword id="KW-0547">Nucleotide-binding</keyword>
<feature type="chain" id="PRO_1000187494" description="Chromosome partition protein MukB">
    <location>
        <begin position="1"/>
        <end position="1485"/>
    </location>
</feature>
<feature type="region of interest" description="Flexible hinge" evidence="1">
    <location>
        <begin position="666"/>
        <end position="783"/>
    </location>
</feature>
<feature type="coiled-coil region" evidence="1">
    <location>
        <begin position="337"/>
        <end position="480"/>
    </location>
</feature>
<feature type="coiled-coil region" evidence="1">
    <location>
        <begin position="509"/>
        <end position="605"/>
    </location>
</feature>
<feature type="coiled-coil region" evidence="1">
    <location>
        <begin position="835"/>
        <end position="915"/>
    </location>
</feature>
<feature type="coiled-coil region" evidence="1">
    <location>
        <begin position="977"/>
        <end position="1116"/>
    </location>
</feature>
<feature type="binding site" evidence="1">
    <location>
        <begin position="34"/>
        <end position="41"/>
    </location>
    <ligand>
        <name>ATP</name>
        <dbReference type="ChEBI" id="CHEBI:30616"/>
    </ligand>
</feature>
<proteinExistence type="inferred from homology"/>
<accession>B1JQT1</accession>
<reference key="1">
    <citation type="submission" date="2008-02" db="EMBL/GenBank/DDBJ databases">
        <title>Complete sequence of Yersinia pseudotuberculosis YPIII.</title>
        <authorList>
            <consortium name="US DOE Joint Genome Institute"/>
            <person name="Copeland A."/>
            <person name="Lucas S."/>
            <person name="Lapidus A."/>
            <person name="Glavina del Rio T."/>
            <person name="Dalin E."/>
            <person name="Tice H."/>
            <person name="Bruce D."/>
            <person name="Goodwin L."/>
            <person name="Pitluck S."/>
            <person name="Munk A.C."/>
            <person name="Brettin T."/>
            <person name="Detter J.C."/>
            <person name="Han C."/>
            <person name="Tapia R."/>
            <person name="Schmutz J."/>
            <person name="Larimer F."/>
            <person name="Land M."/>
            <person name="Hauser L."/>
            <person name="Challacombe J.F."/>
            <person name="Green L."/>
            <person name="Lindler L.E."/>
            <person name="Nikolich M.P."/>
            <person name="Richardson P."/>
        </authorList>
    </citation>
    <scope>NUCLEOTIDE SEQUENCE [LARGE SCALE GENOMIC DNA]</scope>
    <source>
        <strain>YPIII</strain>
    </source>
</reference>
<sequence>MIERGKFRSLTLVNWNGFFARTFDLDELVTTLSGGNGAGKSTTMAAFVTALIPDLTLLHFRNTTEAGATSGSRDKGLHGKLRAGVCYSTLDVVNSRHQRVVVGVRLQQVAGRDRKVDIKPFTIQGLPTAIQPTEILTELVAERQARVLSLPELKERVEAMEGVQFKQFNSITDYHSLMFDLGVIPKRLRSSADRSKFYRLIEASLYGGISSAITRSLRDYLLPENSGVRKAFQDMEAALRENRMTLEAIRVTQSDRDLFKHLISEATSYVAADYMRHANERRIHLDSALVLRRDLFSSRKQLVTEQYRHVEMSRELAEQSGAESDLETDYQAASDHLNLVQTAMRQQEKIERYQSDLEELTYRLEEQSEVVSEASEQQADNEARAEAAELEVDELKSQLADYQQALDVQQTRAIQYQQALQALERARALCQLPELTADNAEEWLETFHAKEQEATESLLQLEQKLSVADAAHSQFEQAYQLVVNIAGEVSRSEAWQTARELLRDWPSQQHLAERVQPLRMRLSELEQRLRAQQDAERLLQEFCKRQGNAYQPEELEALQRELESQVEELSLSVSDAGERRMAMRQELEQLKLKIQELTARAPVWLAAQDALSQLSEQSGEALEDSRQVTEYMQQLLERERETTVERDEIAASKRAIEAQIERLSQPSGAEDARLIALAERFGGVLLSEIYDDVTIDDAPYFSALYGPSRHGIVVPDLSLVREHLQGLDDCPEDLYLIEGDPQSFDDSVFAVEEHEKAVVVKIADRQWRYSRYPEVPLFGRAARENRLETLYQERDRLAERYATLSFDVQKTQRTHQAFSRFIGSHLAVAFDADPEAEIRLLNTRRGEIERALNAHEDQNQQQRQQFDQAKEGISALNRLIPLVSLLLDETLTDRVEEITEELAEAQEAARYIQQHGVSLTKLEPLLSVLQSDPQQHEQLQESYVLAQNSQRLAKQQAFALTEVVQRRAHFSYTDSAGMLTENSDLNDKLRQRLEQAEAERTRAREQLRQYQSQFTQYSQVLASLKSSYDAKRDMLKELSQELVDIGVPADANAEARARARRDELHAALSTNRSRRNQLEKQLTFCEAEMDSLQKKLRKLERDYHQIREQVVNAKAGWCAVMRMVKDNGVERRLHRRELAYMDGDELRSMSDKALGALRLAVADNEHLRDVLRLSEDPKRPERKIQFYIAVYQHLRERIRQDIIRTDDPVEAIEQMEIELGRLTEELTAREQKLAISSKSVSNIIRKTIHREQNRIRMLNQGLQAVSFGQVKSVRLNVNVREAHATLLDVLSEQQEQHQDLFNSNRLTFSEALAKLYQRLNPQMDMGQRLPQTIGEELLDYRNYLELEVEVYRGADGWLRAESGALSTGEAIGTGMSILVMVVQSWEEESRRLRGKDISPCRLLFLDEAARLDAKSIATLFELCERLEMQLIIAAPENISPEKGTTYKLVRKVFQNHEHVHVVGLRGFANEIPSLPPIAAELQQGG</sequence>
<comment type="function">
    <text evidence="1">Plays a central role in chromosome condensation, segregation and cell cycle progression. Functions as a homodimer, which is essential for chromosome partition. Involved in negative DNA supercoiling in vivo, and by this means organize and compact chromosomes. May achieve or facilitate chromosome segregation by condensation DNA from both sides of a centrally located replisome during cell division.</text>
</comment>
<comment type="subunit">
    <text evidence="1">Homodimerization via its hinge domain. Binds to DNA via its C-terminal region. Interacts, and probably forms a ternary complex, with MukE and MukF via its C-terminal region. The complex formation is stimulated by calcium or magnesium. Interacts with tubulin-related protein FtsZ.</text>
</comment>
<comment type="subcellular location">
    <subcellularLocation>
        <location evidence="1">Cytoplasm</location>
        <location evidence="1">Nucleoid</location>
    </subcellularLocation>
    <text evidence="1">Restricted to the nucleoid region.</text>
</comment>
<comment type="domain">
    <text evidence="1">The hinge domain, which separates the large intramolecular coiled coil regions, allows the homodimerization, forming a V-shaped homodimer.</text>
</comment>
<comment type="similarity">
    <text evidence="1">Belongs to the SMC family. MukB subfamily.</text>
</comment>
<gene>
    <name evidence="1" type="primary">mukB</name>
    <name type="ordered locus">YPK_2655</name>
</gene>
<dbReference type="EMBL" id="CP000950">
    <property type="protein sequence ID" value="ACA68932.1"/>
    <property type="molecule type" value="Genomic_DNA"/>
</dbReference>
<dbReference type="RefSeq" id="WP_012304297.1">
    <property type="nucleotide sequence ID" value="NZ_CP009792.1"/>
</dbReference>
<dbReference type="SMR" id="B1JQT1"/>
<dbReference type="KEGG" id="ypy:YPK_2655"/>
<dbReference type="PATRIC" id="fig|502800.11.peg.3353"/>
<dbReference type="GO" id="GO:0005737">
    <property type="term" value="C:cytoplasm"/>
    <property type="evidence" value="ECO:0007669"/>
    <property type="project" value="UniProtKB-UniRule"/>
</dbReference>
<dbReference type="GO" id="GO:0009295">
    <property type="term" value="C:nucleoid"/>
    <property type="evidence" value="ECO:0007669"/>
    <property type="project" value="UniProtKB-SubCell"/>
</dbReference>
<dbReference type="GO" id="GO:0005524">
    <property type="term" value="F:ATP binding"/>
    <property type="evidence" value="ECO:0007669"/>
    <property type="project" value="UniProtKB-UniRule"/>
</dbReference>
<dbReference type="GO" id="GO:0003677">
    <property type="term" value="F:DNA binding"/>
    <property type="evidence" value="ECO:0007669"/>
    <property type="project" value="UniProtKB-UniRule"/>
</dbReference>
<dbReference type="GO" id="GO:0051301">
    <property type="term" value="P:cell division"/>
    <property type="evidence" value="ECO:0007669"/>
    <property type="project" value="UniProtKB-KW"/>
</dbReference>
<dbReference type="GO" id="GO:0030261">
    <property type="term" value="P:chromosome condensation"/>
    <property type="evidence" value="ECO:0007669"/>
    <property type="project" value="UniProtKB-KW"/>
</dbReference>
<dbReference type="GO" id="GO:0007059">
    <property type="term" value="P:chromosome segregation"/>
    <property type="evidence" value="ECO:0007669"/>
    <property type="project" value="UniProtKB-UniRule"/>
</dbReference>
<dbReference type="GO" id="GO:0006260">
    <property type="term" value="P:DNA replication"/>
    <property type="evidence" value="ECO:0007669"/>
    <property type="project" value="UniProtKB-UniRule"/>
</dbReference>
<dbReference type="FunFam" id="3.30.70.3500:FF:000001">
    <property type="entry name" value="Chromosome partition protein MukB"/>
    <property type="match status" value="1"/>
</dbReference>
<dbReference type="FunFam" id="3.40.1140.10:FF:000001">
    <property type="entry name" value="Chromosome partition protein MukB"/>
    <property type="match status" value="1"/>
</dbReference>
<dbReference type="FunFam" id="3.40.1140.10:FF:000002">
    <property type="entry name" value="Chromosome partition protein MukB"/>
    <property type="match status" value="1"/>
</dbReference>
<dbReference type="Gene3D" id="1.10.287.1490">
    <property type="match status" value="1"/>
</dbReference>
<dbReference type="Gene3D" id="1.20.58.850">
    <property type="match status" value="1"/>
</dbReference>
<dbReference type="Gene3D" id="3.40.1140.10">
    <property type="match status" value="2"/>
</dbReference>
<dbReference type="Gene3D" id="1.20.5.420">
    <property type="entry name" value="Immunoglobulin FC, subunit C"/>
    <property type="match status" value="1"/>
</dbReference>
<dbReference type="Gene3D" id="3.30.70.3500">
    <property type="entry name" value="MukB, hinge domain"/>
    <property type="match status" value="1"/>
</dbReference>
<dbReference type="HAMAP" id="MF_01800">
    <property type="entry name" value="MukB"/>
    <property type="match status" value="1"/>
</dbReference>
<dbReference type="InterPro" id="IPR012090">
    <property type="entry name" value="MukB"/>
</dbReference>
<dbReference type="InterPro" id="IPR050308">
    <property type="entry name" value="MukB/SMC"/>
</dbReference>
<dbReference type="InterPro" id="IPR032520">
    <property type="entry name" value="MukB_hinge"/>
</dbReference>
<dbReference type="InterPro" id="IPR042501">
    <property type="entry name" value="MukB_hinge_sf"/>
</dbReference>
<dbReference type="InterPro" id="IPR007406">
    <property type="entry name" value="MukB_N_dom"/>
</dbReference>
<dbReference type="InterPro" id="IPR027417">
    <property type="entry name" value="P-loop_NTPase"/>
</dbReference>
<dbReference type="NCBIfam" id="NF003422">
    <property type="entry name" value="PRK04863.1"/>
    <property type="match status" value="1"/>
</dbReference>
<dbReference type="PANTHER" id="PTHR42963">
    <property type="entry name" value="CHROMOSOME PARTITION PROTEIN MUKB"/>
    <property type="match status" value="1"/>
</dbReference>
<dbReference type="PANTHER" id="PTHR42963:SF1">
    <property type="entry name" value="DUF4476 DOMAIN-CONTAINING PROTEIN"/>
    <property type="match status" value="1"/>
</dbReference>
<dbReference type="Pfam" id="PF04310">
    <property type="entry name" value="MukB"/>
    <property type="match status" value="1"/>
</dbReference>
<dbReference type="Pfam" id="PF16330">
    <property type="entry name" value="MukB_hinge"/>
    <property type="match status" value="1"/>
</dbReference>
<dbReference type="Pfam" id="PF13558">
    <property type="entry name" value="SbcC_Walker_B"/>
    <property type="match status" value="1"/>
</dbReference>
<dbReference type="PIRSF" id="PIRSF005246">
    <property type="entry name" value="MukB"/>
    <property type="match status" value="1"/>
</dbReference>
<dbReference type="SUPFAM" id="SSF52540">
    <property type="entry name" value="P-loop containing nucleoside triphosphate hydrolases"/>
    <property type="match status" value="2"/>
</dbReference>
<name>MUKB_YERPY</name>
<protein>
    <recommendedName>
        <fullName evidence="1">Chromosome partition protein MukB</fullName>
    </recommendedName>
    <alternativeName>
        <fullName evidence="1">Structural maintenance of chromosome-related protein</fullName>
    </alternativeName>
</protein>
<evidence type="ECO:0000255" key="1">
    <source>
        <dbReference type="HAMAP-Rule" id="MF_01800"/>
    </source>
</evidence>